<evidence type="ECO:0000255" key="1">
    <source>
        <dbReference type="HAMAP-Rule" id="MF_01031"/>
    </source>
</evidence>
<organism>
    <name type="scientific">Pseudomonas savastanoi pv. phaseolicola (strain 1448A / Race 6)</name>
    <name type="common">Pseudomonas syringae pv. phaseolicola (strain 1448A / Race 6)</name>
    <dbReference type="NCBI Taxonomy" id="264730"/>
    <lineage>
        <taxon>Bacteria</taxon>
        <taxon>Pseudomonadati</taxon>
        <taxon>Pseudomonadota</taxon>
        <taxon>Gammaproteobacteria</taxon>
        <taxon>Pseudomonadales</taxon>
        <taxon>Pseudomonadaceae</taxon>
        <taxon>Pseudomonas</taxon>
    </lineage>
</organism>
<protein>
    <recommendedName>
        <fullName evidence="1">3-isopropylmalate dehydratase small subunit</fullName>
        <ecNumber evidence="1">4.2.1.33</ecNumber>
    </recommendedName>
    <alternativeName>
        <fullName evidence="1">Alpha-IPM isomerase</fullName>
        <shortName evidence="1">IPMI</shortName>
    </alternativeName>
    <alternativeName>
        <fullName evidence="1">Isopropylmalate isomerase</fullName>
    </alternativeName>
</protein>
<keyword id="KW-0028">Amino-acid biosynthesis</keyword>
<keyword id="KW-0100">Branched-chain amino acid biosynthesis</keyword>
<keyword id="KW-0432">Leucine biosynthesis</keyword>
<keyword id="KW-0456">Lyase</keyword>
<sequence>MKAFTQHNGLVAPLDRANVDTDQIIPKQFLKSIKRTGFGPNLFDEWRYLDVGQPYQDNSKRPLNHDFVLNHERYQGASVLLARENFGCGSSREHAPWALEEYGFCAIIAPSYADIFFNNSFKNGLLPIILSEAEVDELFKQVEASPGYQLSIDLQAQTVTRPDGKVLSFEIDAFRKHCLLNGLDDIGLTLMDADAIASFESRHRASQPWLFRD</sequence>
<dbReference type="EC" id="4.2.1.33" evidence="1"/>
<dbReference type="EMBL" id="CP000058">
    <property type="protein sequence ID" value="AAZ36192.1"/>
    <property type="molecule type" value="Genomic_DNA"/>
</dbReference>
<dbReference type="RefSeq" id="WP_005732380.1">
    <property type="nucleotide sequence ID" value="NC_005773.3"/>
</dbReference>
<dbReference type="SMR" id="Q48K98"/>
<dbReference type="GeneID" id="69858896"/>
<dbReference type="KEGG" id="psp:PSPPH_1953"/>
<dbReference type="eggNOG" id="COG0066">
    <property type="taxonomic scope" value="Bacteria"/>
</dbReference>
<dbReference type="HOGENOM" id="CLU_081378_0_3_6"/>
<dbReference type="UniPathway" id="UPA00048">
    <property type="reaction ID" value="UER00071"/>
</dbReference>
<dbReference type="Proteomes" id="UP000000551">
    <property type="component" value="Chromosome"/>
</dbReference>
<dbReference type="GO" id="GO:0009316">
    <property type="term" value="C:3-isopropylmalate dehydratase complex"/>
    <property type="evidence" value="ECO:0007669"/>
    <property type="project" value="InterPro"/>
</dbReference>
<dbReference type="GO" id="GO:0003861">
    <property type="term" value="F:3-isopropylmalate dehydratase activity"/>
    <property type="evidence" value="ECO:0007669"/>
    <property type="project" value="UniProtKB-UniRule"/>
</dbReference>
<dbReference type="GO" id="GO:0009098">
    <property type="term" value="P:L-leucine biosynthetic process"/>
    <property type="evidence" value="ECO:0007669"/>
    <property type="project" value="UniProtKB-UniRule"/>
</dbReference>
<dbReference type="CDD" id="cd01577">
    <property type="entry name" value="IPMI_Swivel"/>
    <property type="match status" value="1"/>
</dbReference>
<dbReference type="FunFam" id="3.20.19.10:FF:000003">
    <property type="entry name" value="3-isopropylmalate dehydratase small subunit"/>
    <property type="match status" value="1"/>
</dbReference>
<dbReference type="Gene3D" id="3.20.19.10">
    <property type="entry name" value="Aconitase, domain 4"/>
    <property type="match status" value="1"/>
</dbReference>
<dbReference type="HAMAP" id="MF_01031">
    <property type="entry name" value="LeuD_type1"/>
    <property type="match status" value="1"/>
</dbReference>
<dbReference type="InterPro" id="IPR004431">
    <property type="entry name" value="3-IsopropMal_deHydase_ssu"/>
</dbReference>
<dbReference type="InterPro" id="IPR015928">
    <property type="entry name" value="Aconitase/3IPM_dehydase_swvl"/>
</dbReference>
<dbReference type="InterPro" id="IPR000573">
    <property type="entry name" value="AconitaseA/IPMdHydase_ssu_swvl"/>
</dbReference>
<dbReference type="InterPro" id="IPR033940">
    <property type="entry name" value="IPMI_Swivel"/>
</dbReference>
<dbReference type="InterPro" id="IPR050075">
    <property type="entry name" value="LeuD"/>
</dbReference>
<dbReference type="NCBIfam" id="TIGR00171">
    <property type="entry name" value="leuD"/>
    <property type="match status" value="1"/>
</dbReference>
<dbReference type="NCBIfam" id="NF002458">
    <property type="entry name" value="PRK01641.1"/>
    <property type="match status" value="1"/>
</dbReference>
<dbReference type="PANTHER" id="PTHR43345:SF5">
    <property type="entry name" value="3-ISOPROPYLMALATE DEHYDRATASE SMALL SUBUNIT"/>
    <property type="match status" value="1"/>
</dbReference>
<dbReference type="PANTHER" id="PTHR43345">
    <property type="entry name" value="3-ISOPROPYLMALATE DEHYDRATASE SMALL SUBUNIT 2-RELATED-RELATED"/>
    <property type="match status" value="1"/>
</dbReference>
<dbReference type="Pfam" id="PF00694">
    <property type="entry name" value="Aconitase_C"/>
    <property type="match status" value="1"/>
</dbReference>
<dbReference type="SUPFAM" id="SSF52016">
    <property type="entry name" value="LeuD/IlvD-like"/>
    <property type="match status" value="1"/>
</dbReference>
<accession>Q48K98</accession>
<comment type="function">
    <text evidence="1">Catalyzes the isomerization between 2-isopropylmalate and 3-isopropylmalate, via the formation of 2-isopropylmaleate.</text>
</comment>
<comment type="catalytic activity">
    <reaction evidence="1">
        <text>(2R,3S)-3-isopropylmalate = (2S)-2-isopropylmalate</text>
        <dbReference type="Rhea" id="RHEA:32287"/>
        <dbReference type="ChEBI" id="CHEBI:1178"/>
        <dbReference type="ChEBI" id="CHEBI:35121"/>
        <dbReference type="EC" id="4.2.1.33"/>
    </reaction>
</comment>
<comment type="pathway">
    <text evidence="1">Amino-acid biosynthesis; L-leucine biosynthesis; L-leucine from 3-methyl-2-oxobutanoate: step 2/4.</text>
</comment>
<comment type="subunit">
    <text evidence="1">Heterodimer of LeuC and LeuD.</text>
</comment>
<comment type="similarity">
    <text evidence="1">Belongs to the LeuD family. LeuD type 1 subfamily.</text>
</comment>
<reference key="1">
    <citation type="journal article" date="2005" name="J. Bacteriol.">
        <title>Whole-genome sequence analysis of Pseudomonas syringae pv. phaseolicola 1448A reveals divergence among pathovars in genes involved in virulence and transposition.</title>
        <authorList>
            <person name="Joardar V."/>
            <person name="Lindeberg M."/>
            <person name="Jackson R.W."/>
            <person name="Selengut J."/>
            <person name="Dodson R."/>
            <person name="Brinkac L.M."/>
            <person name="Daugherty S.C."/>
            <person name="DeBoy R.T."/>
            <person name="Durkin A.S."/>
            <person name="Gwinn Giglio M."/>
            <person name="Madupu R."/>
            <person name="Nelson W.C."/>
            <person name="Rosovitz M.J."/>
            <person name="Sullivan S.A."/>
            <person name="Crabtree J."/>
            <person name="Creasy T."/>
            <person name="Davidsen T.M."/>
            <person name="Haft D.H."/>
            <person name="Zafar N."/>
            <person name="Zhou L."/>
            <person name="Halpin R."/>
            <person name="Holley T."/>
            <person name="Khouri H.M."/>
            <person name="Feldblyum T.V."/>
            <person name="White O."/>
            <person name="Fraser C.M."/>
            <person name="Chatterjee A.K."/>
            <person name="Cartinhour S."/>
            <person name="Schneider D."/>
            <person name="Mansfield J.W."/>
            <person name="Collmer A."/>
            <person name="Buell R."/>
        </authorList>
    </citation>
    <scope>NUCLEOTIDE SEQUENCE [LARGE SCALE GENOMIC DNA]</scope>
    <source>
        <strain>1448A / Race 6</strain>
    </source>
</reference>
<proteinExistence type="inferred from homology"/>
<gene>
    <name evidence="1" type="primary">leuD</name>
    <name type="ordered locus">PSPPH_1953</name>
</gene>
<name>LEUD_PSE14</name>
<feature type="chain" id="PRO_0000141860" description="3-isopropylmalate dehydratase small subunit">
    <location>
        <begin position="1"/>
        <end position="213"/>
    </location>
</feature>